<gene>
    <name evidence="4" type="primary">rayT</name>
    <name evidence="5" type="synonym">TnpAREP</name>
    <name type="synonym">yafM</name>
    <name type="ordered locus">b0228</name>
    <name type="ordered locus">JW0218</name>
</gene>
<proteinExistence type="evidence at protein level"/>
<keyword id="KW-0002">3D-structure</keyword>
<keyword id="KW-0238">DNA-binding</keyword>
<keyword id="KW-0464">Manganese</keyword>
<keyword id="KW-1185">Reference proteome</keyword>
<keyword id="KW-0814">Transposable element</keyword>
<keyword id="KW-0815">Transposition</keyword>
<comment type="function">
    <text evidence="1 2 3">Transposase that is always flanked by repeated extragenic palindrome (REP) sequences, which are clustered in structures called bacterial interspersed mosaic elements (BIMEs). RayT catalyzes cleavage and recombination of BIMEs. Binds REP sequences and cleaves BIMEs both upstream and downstream of the REP sequence. Could be important in the creation of BIME variability and amplification.</text>
</comment>
<comment type="activity regulation">
    <text evidence="2">Cleavage occurs in the presence of magnesium, but is much more pronounced with manganese.</text>
</comment>
<comment type="subunit">
    <text evidence="3">Monomer.</text>
</comment>
<comment type="similarity">
    <text evidence="6">Belongs to the transposase 17 family. RAYT subfamily.</text>
</comment>
<protein>
    <recommendedName>
        <fullName>REP-associated tyrosine transposase</fullName>
    </recommendedName>
</protein>
<feature type="chain" id="PRO_0000168536" description="REP-associated tyrosine transposase">
    <location>
        <begin position="1"/>
        <end position="165"/>
    </location>
</feature>
<feature type="strand" evidence="7">
    <location>
        <begin position="13"/>
        <end position="21"/>
    </location>
</feature>
<feature type="helix" evidence="7">
    <location>
        <begin position="27"/>
        <end position="30"/>
    </location>
</feature>
<feature type="helix" evidence="7">
    <location>
        <begin position="32"/>
        <end position="45"/>
    </location>
</feature>
<feature type="strand" evidence="7">
    <location>
        <begin position="49"/>
        <end position="55"/>
    </location>
</feature>
<feature type="strand" evidence="7">
    <location>
        <begin position="57"/>
        <end position="65"/>
    </location>
</feature>
<feature type="helix" evidence="7">
    <location>
        <begin position="73"/>
        <end position="87"/>
    </location>
</feature>
<feature type="strand" evidence="7">
    <location>
        <begin position="99"/>
        <end position="102"/>
    </location>
</feature>
<feature type="helix" evidence="7">
    <location>
        <begin position="106"/>
        <end position="122"/>
    </location>
</feature>
<feature type="helix" evidence="7">
    <location>
        <begin position="129"/>
        <end position="131"/>
    </location>
</feature>
<feature type="strand" evidence="7">
    <location>
        <begin position="134"/>
        <end position="136"/>
    </location>
</feature>
<feature type="helix" evidence="7">
    <location>
        <begin position="137"/>
        <end position="142"/>
    </location>
</feature>
<name>RAYT_ECOLI</name>
<organism>
    <name type="scientific">Escherichia coli (strain K12)</name>
    <dbReference type="NCBI Taxonomy" id="83333"/>
    <lineage>
        <taxon>Bacteria</taxon>
        <taxon>Pseudomonadati</taxon>
        <taxon>Pseudomonadota</taxon>
        <taxon>Gammaproteobacteria</taxon>
        <taxon>Enterobacterales</taxon>
        <taxon>Enterobacteriaceae</taxon>
        <taxon>Escherichia</taxon>
    </lineage>
</organism>
<sequence length="165" mass="20042">MSEYRRYYIKGGTWFFTVNLRNRRSQLLTTQYQMLRHAIIKVKRDRPFEINAWVVLPEHMHCIWTLPEGDDDFSSRWREIKKQFTHACGLKNIWQPRFWEHAIRNTKDYRHHVDYIYINPVKHGWVKQVSDWPFSTFHRDVARGLYPIDWAGDVTDFSAGERIIS</sequence>
<dbReference type="EMBL" id="D38582">
    <property type="protein sequence ID" value="BAA07590.1"/>
    <property type="molecule type" value="Genomic_DNA"/>
</dbReference>
<dbReference type="EMBL" id="U70214">
    <property type="protein sequence ID" value="AAB08648.1"/>
    <property type="molecule type" value="Genomic_DNA"/>
</dbReference>
<dbReference type="EMBL" id="U00096">
    <property type="protein sequence ID" value="AAC73332.1"/>
    <property type="molecule type" value="Genomic_DNA"/>
</dbReference>
<dbReference type="EMBL" id="AP009048">
    <property type="protein sequence ID" value="BAA77898.1"/>
    <property type="molecule type" value="Genomic_DNA"/>
</dbReference>
<dbReference type="PIR" id="E64747">
    <property type="entry name" value="E64747"/>
</dbReference>
<dbReference type="RefSeq" id="NP_414763.1">
    <property type="nucleotide sequence ID" value="NC_000913.3"/>
</dbReference>
<dbReference type="RefSeq" id="WP_000006255.1">
    <property type="nucleotide sequence ID" value="NZ_SSZK01000029.1"/>
</dbReference>
<dbReference type="PDB" id="4ER8">
    <property type="method" value="X-ray"/>
    <property type="resolution" value="2.60 A"/>
    <property type="chains" value="A=1-165"/>
</dbReference>
<dbReference type="PDBsum" id="4ER8"/>
<dbReference type="SMR" id="Q47152"/>
<dbReference type="BioGRID" id="4259773">
    <property type="interactions" value="32"/>
</dbReference>
<dbReference type="DIP" id="DIP-11217N"/>
<dbReference type="FunCoup" id="Q47152">
    <property type="interactions" value="222"/>
</dbReference>
<dbReference type="IntAct" id="Q47152">
    <property type="interactions" value="1"/>
</dbReference>
<dbReference type="STRING" id="511145.b0228"/>
<dbReference type="PaxDb" id="511145-b0228"/>
<dbReference type="EnsemblBacteria" id="AAC73332">
    <property type="protein sequence ID" value="AAC73332"/>
    <property type="gene ID" value="b0228"/>
</dbReference>
<dbReference type="GeneID" id="944913"/>
<dbReference type="KEGG" id="ecj:JW0218"/>
<dbReference type="KEGG" id="eco:b0228"/>
<dbReference type="KEGG" id="ecoc:C3026_01080"/>
<dbReference type="KEGG" id="ecoc:C3026_23820"/>
<dbReference type="PATRIC" id="fig|1411691.4.peg.2055"/>
<dbReference type="EchoBASE" id="EB2944"/>
<dbReference type="eggNOG" id="COG1943">
    <property type="taxonomic scope" value="Bacteria"/>
</dbReference>
<dbReference type="HOGENOM" id="CLU_068226_6_0_6"/>
<dbReference type="InParanoid" id="Q47152"/>
<dbReference type="OMA" id="HVEYIHY"/>
<dbReference type="OrthoDB" id="9794403at2"/>
<dbReference type="PhylomeDB" id="Q47152"/>
<dbReference type="BioCyc" id="EcoCyc:G6112-MONOMER"/>
<dbReference type="EvolutionaryTrace" id="Q47152"/>
<dbReference type="PRO" id="PR:Q47152"/>
<dbReference type="Proteomes" id="UP000000625">
    <property type="component" value="Chromosome"/>
</dbReference>
<dbReference type="GO" id="GO:0000405">
    <property type="term" value="F:bubble DNA binding"/>
    <property type="evidence" value="ECO:0000314"/>
    <property type="project" value="EcoCyc"/>
</dbReference>
<dbReference type="GO" id="GO:0003677">
    <property type="term" value="F:DNA binding"/>
    <property type="evidence" value="ECO:0000314"/>
    <property type="project" value="EcoCyc"/>
</dbReference>
<dbReference type="GO" id="GO:0032448">
    <property type="term" value="F:DNA hairpin binding"/>
    <property type="evidence" value="ECO:0000314"/>
    <property type="project" value="EcoCyc"/>
</dbReference>
<dbReference type="GO" id="GO:0043565">
    <property type="term" value="F:sequence-specific DNA binding"/>
    <property type="evidence" value="ECO:0000314"/>
    <property type="project" value="EcoCyc"/>
</dbReference>
<dbReference type="GO" id="GO:0003697">
    <property type="term" value="F:single-stranded DNA binding"/>
    <property type="evidence" value="ECO:0000314"/>
    <property type="project" value="EcoCyc"/>
</dbReference>
<dbReference type="GO" id="GO:0000014">
    <property type="term" value="F:single-stranded DNA endodeoxyribonuclease activity"/>
    <property type="evidence" value="ECO:0000314"/>
    <property type="project" value="EcoCyc"/>
</dbReference>
<dbReference type="GO" id="GO:0004803">
    <property type="term" value="F:transposase activity"/>
    <property type="evidence" value="ECO:0007669"/>
    <property type="project" value="InterPro"/>
</dbReference>
<dbReference type="GO" id="GO:0006310">
    <property type="term" value="P:DNA recombination"/>
    <property type="evidence" value="ECO:0000314"/>
    <property type="project" value="EcoCyc"/>
</dbReference>
<dbReference type="GO" id="GO:0006313">
    <property type="term" value="P:DNA transposition"/>
    <property type="evidence" value="ECO:0007669"/>
    <property type="project" value="InterPro"/>
</dbReference>
<dbReference type="FunFam" id="3.30.70.1290:FF:000001">
    <property type="entry name" value="REP-associated tyrosine transposase"/>
    <property type="match status" value="1"/>
</dbReference>
<dbReference type="Gene3D" id="3.30.70.1290">
    <property type="entry name" value="Transposase IS200-like"/>
    <property type="match status" value="1"/>
</dbReference>
<dbReference type="InterPro" id="IPR052715">
    <property type="entry name" value="RAYT_transposase"/>
</dbReference>
<dbReference type="InterPro" id="IPR002686">
    <property type="entry name" value="Transposase_17"/>
</dbReference>
<dbReference type="InterPro" id="IPR036515">
    <property type="entry name" value="Transposase_17_sf"/>
</dbReference>
<dbReference type="NCBIfam" id="NF047646">
    <property type="entry name" value="REP_Tyr_transpos"/>
    <property type="match status" value="1"/>
</dbReference>
<dbReference type="PANTHER" id="PTHR36966">
    <property type="entry name" value="REP-ASSOCIATED TYROSINE TRANSPOSASE"/>
    <property type="match status" value="1"/>
</dbReference>
<dbReference type="PANTHER" id="PTHR36966:SF1">
    <property type="entry name" value="REP-ASSOCIATED TYROSINE TRANSPOSASE"/>
    <property type="match status" value="1"/>
</dbReference>
<dbReference type="SMART" id="SM01321">
    <property type="entry name" value="Y1_Tnp"/>
    <property type="match status" value="1"/>
</dbReference>
<dbReference type="SUPFAM" id="SSF143422">
    <property type="entry name" value="Transposase IS200-like"/>
    <property type="match status" value="1"/>
</dbReference>
<evidence type="ECO:0000269" key="1">
    <source>
    </source>
</evidence>
<evidence type="ECO:0000269" key="2">
    <source>
    </source>
</evidence>
<evidence type="ECO:0000269" key="3">
    <source>
    </source>
</evidence>
<evidence type="ECO:0000303" key="4">
    <source>
    </source>
</evidence>
<evidence type="ECO:0000303" key="5">
    <source>
    </source>
</evidence>
<evidence type="ECO:0000305" key="6"/>
<evidence type="ECO:0007829" key="7">
    <source>
        <dbReference type="PDB" id="4ER8"/>
    </source>
</evidence>
<accession>Q47152</accession>
<reference key="1">
    <citation type="journal article" date="1995" name="Mutat. Res.">
        <title>dinP, a new gene in Escherichia coli, whose product shows similarities to UmuC and its homologues.</title>
        <authorList>
            <person name="Ohmori H."/>
            <person name="Hatada E."/>
            <person name="Qiao Y."/>
            <person name="Tsuji M."/>
            <person name="Fukuda R."/>
        </authorList>
    </citation>
    <scope>NUCLEOTIDE SEQUENCE [GENOMIC DNA]</scope>
    <source>
        <strain>K12 / W3110 / ATCC 27325 / DSM 5911</strain>
    </source>
</reference>
<reference key="2">
    <citation type="submission" date="1996-02" db="EMBL/GenBank/DDBJ databases">
        <title>Systematic sequencing of the Escherichia coli genome: analysis of the 4.0 - 6.0 min (189,987 - 281,416bp) region.</title>
        <authorList>
            <person name="Takemoto K."/>
            <person name="Mori H."/>
            <person name="Murayama N."/>
            <person name="Kataoka K."/>
            <person name="Yano M."/>
            <person name="Itoh T."/>
            <person name="Yamamoto Y."/>
            <person name="Inokuchi H."/>
            <person name="Miki T."/>
            <person name="Hatada E."/>
            <person name="Fukuda R."/>
            <person name="Ichihara S."/>
            <person name="Mizuno T."/>
            <person name="Makino K."/>
            <person name="Nakata A."/>
            <person name="Yura T."/>
            <person name="Sampei G."/>
            <person name="Mizobuchi K."/>
        </authorList>
    </citation>
    <scope>NUCLEOTIDE SEQUENCE [LARGE SCALE GENOMIC DNA]</scope>
    <source>
        <strain>K12 / W3110 / ATCC 27325 / DSM 5911</strain>
    </source>
</reference>
<reference key="3">
    <citation type="submission" date="1997-01" db="EMBL/GenBank/DDBJ databases">
        <title>Sequence of minutes 4-25 of Escherichia coli.</title>
        <authorList>
            <person name="Chung E."/>
            <person name="Allen E."/>
            <person name="Araujo R."/>
            <person name="Aparicio A.M."/>
            <person name="Davis K."/>
            <person name="Duncan M."/>
            <person name="Federspiel N."/>
            <person name="Hyman R."/>
            <person name="Kalman S."/>
            <person name="Komp C."/>
            <person name="Kurdi O."/>
            <person name="Lew H."/>
            <person name="Lin D."/>
            <person name="Namath A."/>
            <person name="Oefner P."/>
            <person name="Roberts D."/>
            <person name="Schramm S."/>
            <person name="Davis R.W."/>
        </authorList>
    </citation>
    <scope>NUCLEOTIDE SEQUENCE [LARGE SCALE GENOMIC DNA]</scope>
    <source>
        <strain>K12 / MG1655 / ATCC 47076</strain>
    </source>
</reference>
<reference key="4">
    <citation type="journal article" date="1997" name="Science">
        <title>The complete genome sequence of Escherichia coli K-12.</title>
        <authorList>
            <person name="Blattner F.R."/>
            <person name="Plunkett G. III"/>
            <person name="Bloch C.A."/>
            <person name="Perna N.T."/>
            <person name="Burland V."/>
            <person name="Riley M."/>
            <person name="Collado-Vides J."/>
            <person name="Glasner J.D."/>
            <person name="Rode C.K."/>
            <person name="Mayhew G.F."/>
            <person name="Gregor J."/>
            <person name="Davis N.W."/>
            <person name="Kirkpatrick H.A."/>
            <person name="Goeden M.A."/>
            <person name="Rose D.J."/>
            <person name="Mau B."/>
            <person name="Shao Y."/>
        </authorList>
    </citation>
    <scope>NUCLEOTIDE SEQUENCE [LARGE SCALE GENOMIC DNA]</scope>
    <source>
        <strain>K12 / MG1655 / ATCC 47076</strain>
    </source>
</reference>
<reference key="5">
    <citation type="journal article" date="2006" name="Mol. Syst. Biol.">
        <title>Highly accurate genome sequences of Escherichia coli K-12 strains MG1655 and W3110.</title>
        <authorList>
            <person name="Hayashi K."/>
            <person name="Morooka N."/>
            <person name="Yamamoto Y."/>
            <person name="Fujita K."/>
            <person name="Isono K."/>
            <person name="Choi S."/>
            <person name="Ohtsubo E."/>
            <person name="Baba T."/>
            <person name="Wanner B.L."/>
            <person name="Mori H."/>
            <person name="Horiuchi T."/>
        </authorList>
    </citation>
    <scope>NUCLEOTIDE SEQUENCE [LARGE SCALE GENOMIC DNA]</scope>
    <source>
        <strain>K12 / W3110 / ATCC 27325 / DSM 5911</strain>
    </source>
</reference>
<reference key="6">
    <citation type="journal article" date="2010" name="BMC Genomics">
        <title>Identification and characterization of repetitive extragenic palindromes (REP)-associated tyrosine transposases: implications for REP evolution and dynamics in bacterial genomes.</title>
        <authorList>
            <person name="Nunvar J."/>
            <person name="Huckova T."/>
            <person name="Licha I."/>
        </authorList>
    </citation>
    <scope>FUNCTION</scope>
    <scope>GENE NAME</scope>
</reference>
<reference key="7">
    <citation type="journal article" date="2012" name="Nucleic Acids Res.">
        <title>Structuring the bacterial genome: Y1-transposases associated with REP-BIME sequences.</title>
        <authorList>
            <person name="Ton-Hoang B."/>
            <person name="Siguier P."/>
            <person name="Quentin Y."/>
            <person name="Onillon S."/>
            <person name="Marty B."/>
            <person name="Fichant G."/>
            <person name="Chandler M."/>
        </authorList>
    </citation>
    <scope>FUNCTION</scope>
    <scope>ACTIVITY REGULATION</scope>
</reference>
<reference key="8">
    <citation type="journal article" date="2012" name="Nucleic Acids Res.">
        <title>The processing of repetitive extragenic palindromes: the structure of a repetitive extragenic palindrome bound to its associated nuclease.</title>
        <authorList>
            <person name="Messing S.A."/>
            <person name="Ton-Hoang B."/>
            <person name="Hickman A.B."/>
            <person name="McCubbin A.J."/>
            <person name="Peaslee G.F."/>
            <person name="Ghirlando R."/>
            <person name="Chandler M."/>
            <person name="Dyda F."/>
        </authorList>
    </citation>
    <scope>X-RAY CRYSTALLOGRAPHY (2.60 ANGSTROMS)</scope>
    <scope>FUNCTION</scope>
    <scope>DNA-BINDING</scope>
    <scope>SUBUNIT</scope>
</reference>